<accession>A6TAN9</accession>
<name>RF1_KLEP7</name>
<dbReference type="EMBL" id="CP000647">
    <property type="protein sequence ID" value="ABR77660.1"/>
    <property type="molecule type" value="Genomic_DNA"/>
</dbReference>
<dbReference type="RefSeq" id="WP_002910403.1">
    <property type="nucleotide sequence ID" value="NC_009648.1"/>
</dbReference>
<dbReference type="SMR" id="A6TAN9"/>
<dbReference type="STRING" id="272620.KPN_02234"/>
<dbReference type="jPOST" id="A6TAN9"/>
<dbReference type="PaxDb" id="272620-KPN_02234"/>
<dbReference type="EnsemblBacteria" id="ABR77660">
    <property type="protein sequence ID" value="ABR77660"/>
    <property type="gene ID" value="KPN_02234"/>
</dbReference>
<dbReference type="KEGG" id="kpn:KPN_02234"/>
<dbReference type="HOGENOM" id="CLU_036856_0_1_6"/>
<dbReference type="Proteomes" id="UP000000265">
    <property type="component" value="Chromosome"/>
</dbReference>
<dbReference type="GO" id="GO:0005737">
    <property type="term" value="C:cytoplasm"/>
    <property type="evidence" value="ECO:0007669"/>
    <property type="project" value="UniProtKB-SubCell"/>
</dbReference>
<dbReference type="GO" id="GO:0016149">
    <property type="term" value="F:translation release factor activity, codon specific"/>
    <property type="evidence" value="ECO:0007669"/>
    <property type="project" value="UniProtKB-UniRule"/>
</dbReference>
<dbReference type="FunFam" id="3.30.160.20:FF:000004">
    <property type="entry name" value="Peptide chain release factor 1"/>
    <property type="match status" value="1"/>
</dbReference>
<dbReference type="FunFam" id="3.30.70.1660:FF:000002">
    <property type="entry name" value="Peptide chain release factor 1"/>
    <property type="match status" value="1"/>
</dbReference>
<dbReference type="FunFam" id="3.30.70.1660:FF:000004">
    <property type="entry name" value="Peptide chain release factor 1"/>
    <property type="match status" value="1"/>
</dbReference>
<dbReference type="Gene3D" id="3.30.160.20">
    <property type="match status" value="1"/>
</dbReference>
<dbReference type="Gene3D" id="3.30.70.1660">
    <property type="match status" value="2"/>
</dbReference>
<dbReference type="Gene3D" id="6.10.140.1950">
    <property type="match status" value="1"/>
</dbReference>
<dbReference type="HAMAP" id="MF_00093">
    <property type="entry name" value="Rel_fac_1"/>
    <property type="match status" value="1"/>
</dbReference>
<dbReference type="InterPro" id="IPR005139">
    <property type="entry name" value="PCRF"/>
</dbReference>
<dbReference type="InterPro" id="IPR000352">
    <property type="entry name" value="Pep_chain_release_fac_I"/>
</dbReference>
<dbReference type="InterPro" id="IPR045853">
    <property type="entry name" value="Pep_chain_release_fac_I_sf"/>
</dbReference>
<dbReference type="InterPro" id="IPR050057">
    <property type="entry name" value="Prokaryotic/Mito_RF"/>
</dbReference>
<dbReference type="InterPro" id="IPR004373">
    <property type="entry name" value="RF-1"/>
</dbReference>
<dbReference type="NCBIfam" id="TIGR00019">
    <property type="entry name" value="prfA"/>
    <property type="match status" value="1"/>
</dbReference>
<dbReference type="NCBIfam" id="NF001859">
    <property type="entry name" value="PRK00591.1"/>
    <property type="match status" value="1"/>
</dbReference>
<dbReference type="PANTHER" id="PTHR43804">
    <property type="entry name" value="LD18447P"/>
    <property type="match status" value="1"/>
</dbReference>
<dbReference type="PANTHER" id="PTHR43804:SF7">
    <property type="entry name" value="LD18447P"/>
    <property type="match status" value="1"/>
</dbReference>
<dbReference type="Pfam" id="PF03462">
    <property type="entry name" value="PCRF"/>
    <property type="match status" value="1"/>
</dbReference>
<dbReference type="Pfam" id="PF00472">
    <property type="entry name" value="RF-1"/>
    <property type="match status" value="1"/>
</dbReference>
<dbReference type="SMART" id="SM00937">
    <property type="entry name" value="PCRF"/>
    <property type="match status" value="1"/>
</dbReference>
<dbReference type="SUPFAM" id="SSF75620">
    <property type="entry name" value="Release factor"/>
    <property type="match status" value="1"/>
</dbReference>
<dbReference type="PROSITE" id="PS00745">
    <property type="entry name" value="RF_PROK_I"/>
    <property type="match status" value="1"/>
</dbReference>
<protein>
    <recommendedName>
        <fullName evidence="1">Peptide chain release factor 1</fullName>
        <shortName evidence="1">RF-1</shortName>
    </recommendedName>
</protein>
<proteinExistence type="inferred from homology"/>
<keyword id="KW-0963">Cytoplasm</keyword>
<keyword id="KW-0488">Methylation</keyword>
<keyword id="KW-0648">Protein biosynthesis</keyword>
<sequence>MKSSIVAKLEALYERHEEVQALLGDAATIADQDKFRALSREYAQLSDVARCYTDWRQVQEDIETAQMMLDDPEMREMAQEELRDAKEKGDQLEQQLQVLLLPKDPDDERNAFVEVRAGTGGDEAALFAGDLFRMYTRYAESRRWQVEILSANEGEHGGFKEVIAKISGDGVYGRLKFESGGHRVQRVPATESQGRIHTSACTVAVMPELPEAEMPDINPADLRIDTFRSSGAGGQHVNTTDSAIRITHLPTGIVVECQDERSQHKNKAKALSVLGARIRAAEVAKRQQAEASTRRNLLGSGDRSDRNRTYNFPQGRVTDHRINLTLYRLDEAMEGKLDMLIEPIVQEHQADQLAALSEQE</sequence>
<feature type="chain" id="PRO_1000004899" description="Peptide chain release factor 1">
    <location>
        <begin position="1"/>
        <end position="360"/>
    </location>
</feature>
<feature type="region of interest" description="Disordered" evidence="2">
    <location>
        <begin position="285"/>
        <end position="314"/>
    </location>
</feature>
<feature type="modified residue" description="N5-methylglutamine" evidence="1">
    <location>
        <position position="235"/>
    </location>
</feature>
<evidence type="ECO:0000255" key="1">
    <source>
        <dbReference type="HAMAP-Rule" id="MF_00093"/>
    </source>
</evidence>
<evidence type="ECO:0000256" key="2">
    <source>
        <dbReference type="SAM" id="MobiDB-lite"/>
    </source>
</evidence>
<gene>
    <name evidence="1" type="primary">prfA</name>
    <name type="ordered locus">KPN78578_21990</name>
    <name type="ORF">KPN_02234</name>
</gene>
<comment type="function">
    <text evidence="1">Peptide chain release factor 1 directs the termination of translation in response to the peptide chain termination codons UAG and UAA.</text>
</comment>
<comment type="subcellular location">
    <subcellularLocation>
        <location evidence="1">Cytoplasm</location>
    </subcellularLocation>
</comment>
<comment type="PTM">
    <text evidence="1">Methylated by PrmC. Methylation increases the termination efficiency of RF1.</text>
</comment>
<comment type="similarity">
    <text evidence="1">Belongs to the prokaryotic/mitochondrial release factor family.</text>
</comment>
<reference key="1">
    <citation type="submission" date="2006-09" db="EMBL/GenBank/DDBJ databases">
        <authorList>
            <consortium name="The Klebsiella pneumonia Genome Sequencing Project"/>
            <person name="McClelland M."/>
            <person name="Sanderson E.K."/>
            <person name="Spieth J."/>
            <person name="Clifton W.S."/>
            <person name="Latreille P."/>
            <person name="Sabo A."/>
            <person name="Pepin K."/>
            <person name="Bhonagiri V."/>
            <person name="Porwollik S."/>
            <person name="Ali J."/>
            <person name="Wilson R.K."/>
        </authorList>
    </citation>
    <scope>NUCLEOTIDE SEQUENCE [LARGE SCALE GENOMIC DNA]</scope>
    <source>
        <strain>ATCC 700721 / MGH 78578</strain>
    </source>
</reference>
<organism>
    <name type="scientific">Klebsiella pneumoniae subsp. pneumoniae (strain ATCC 700721 / MGH 78578)</name>
    <dbReference type="NCBI Taxonomy" id="272620"/>
    <lineage>
        <taxon>Bacteria</taxon>
        <taxon>Pseudomonadati</taxon>
        <taxon>Pseudomonadota</taxon>
        <taxon>Gammaproteobacteria</taxon>
        <taxon>Enterobacterales</taxon>
        <taxon>Enterobacteriaceae</taxon>
        <taxon>Klebsiella/Raoultella group</taxon>
        <taxon>Klebsiella</taxon>
        <taxon>Klebsiella pneumoniae complex</taxon>
    </lineage>
</organism>